<reference key="1">
    <citation type="submission" date="2007-02" db="EMBL/GenBank/DDBJ databases">
        <title>Complete sequence of Clostridium thermocellum ATCC 27405.</title>
        <authorList>
            <consortium name="US DOE Joint Genome Institute"/>
            <person name="Copeland A."/>
            <person name="Lucas S."/>
            <person name="Lapidus A."/>
            <person name="Barry K."/>
            <person name="Detter J.C."/>
            <person name="Glavina del Rio T."/>
            <person name="Hammon N."/>
            <person name="Israni S."/>
            <person name="Dalin E."/>
            <person name="Tice H."/>
            <person name="Pitluck S."/>
            <person name="Chertkov O."/>
            <person name="Brettin T."/>
            <person name="Bruce D."/>
            <person name="Han C."/>
            <person name="Tapia R."/>
            <person name="Gilna P."/>
            <person name="Schmutz J."/>
            <person name="Larimer F."/>
            <person name="Land M."/>
            <person name="Hauser L."/>
            <person name="Kyrpides N."/>
            <person name="Mikhailova N."/>
            <person name="Wu J.H.D."/>
            <person name="Newcomb M."/>
            <person name="Richardson P."/>
        </authorList>
    </citation>
    <scope>NUCLEOTIDE SEQUENCE [LARGE SCALE GENOMIC DNA]</scope>
    <source>
        <strain>ATCC 27405 / DSM 1237 / JCM 9322 / NBRC 103400 / NCIMB 10682 / NRRL B-4536 / VPI 7372</strain>
    </source>
</reference>
<proteinExistence type="inferred from homology"/>
<sequence length="156" mass="17908">MPRKGNVPKRDVLPDPIYNDKVVAKLINNIMIDGKKSIAQKICYGAFDIIREKTGKDPLEVFEQALNNVMPVLEVKPRRVGGATYQVPVEVRPERRQALALRWLVVYARERSERTMKERLAAEIIDATNNMGGAYKKKEDTHKMAEANKAFAHYRW</sequence>
<dbReference type="EMBL" id="CP000568">
    <property type="protein sequence ID" value="ABN53927.1"/>
    <property type="molecule type" value="Genomic_DNA"/>
</dbReference>
<dbReference type="RefSeq" id="WP_003514305.1">
    <property type="nucleotide sequence ID" value="NC_009012.1"/>
</dbReference>
<dbReference type="SMR" id="A3DIZ8"/>
<dbReference type="STRING" id="203119.Cthe_2728"/>
<dbReference type="GeneID" id="35804253"/>
<dbReference type="KEGG" id="cth:Cthe_2728"/>
<dbReference type="eggNOG" id="COG0049">
    <property type="taxonomic scope" value="Bacteria"/>
</dbReference>
<dbReference type="HOGENOM" id="CLU_072226_1_1_9"/>
<dbReference type="OrthoDB" id="9807653at2"/>
<dbReference type="Proteomes" id="UP000002145">
    <property type="component" value="Chromosome"/>
</dbReference>
<dbReference type="GO" id="GO:0015935">
    <property type="term" value="C:small ribosomal subunit"/>
    <property type="evidence" value="ECO:0007669"/>
    <property type="project" value="InterPro"/>
</dbReference>
<dbReference type="GO" id="GO:0019843">
    <property type="term" value="F:rRNA binding"/>
    <property type="evidence" value="ECO:0007669"/>
    <property type="project" value="UniProtKB-UniRule"/>
</dbReference>
<dbReference type="GO" id="GO:0003735">
    <property type="term" value="F:structural constituent of ribosome"/>
    <property type="evidence" value="ECO:0007669"/>
    <property type="project" value="InterPro"/>
</dbReference>
<dbReference type="GO" id="GO:0000049">
    <property type="term" value="F:tRNA binding"/>
    <property type="evidence" value="ECO:0007669"/>
    <property type="project" value="UniProtKB-UniRule"/>
</dbReference>
<dbReference type="GO" id="GO:0006412">
    <property type="term" value="P:translation"/>
    <property type="evidence" value="ECO:0007669"/>
    <property type="project" value="UniProtKB-UniRule"/>
</dbReference>
<dbReference type="CDD" id="cd14869">
    <property type="entry name" value="uS7_Bacteria"/>
    <property type="match status" value="1"/>
</dbReference>
<dbReference type="FunFam" id="1.10.455.10:FF:000001">
    <property type="entry name" value="30S ribosomal protein S7"/>
    <property type="match status" value="1"/>
</dbReference>
<dbReference type="Gene3D" id="1.10.455.10">
    <property type="entry name" value="Ribosomal protein S7 domain"/>
    <property type="match status" value="1"/>
</dbReference>
<dbReference type="HAMAP" id="MF_00480_B">
    <property type="entry name" value="Ribosomal_uS7_B"/>
    <property type="match status" value="1"/>
</dbReference>
<dbReference type="InterPro" id="IPR000235">
    <property type="entry name" value="Ribosomal_uS7"/>
</dbReference>
<dbReference type="InterPro" id="IPR005717">
    <property type="entry name" value="Ribosomal_uS7_bac/org-type"/>
</dbReference>
<dbReference type="InterPro" id="IPR020606">
    <property type="entry name" value="Ribosomal_uS7_CS"/>
</dbReference>
<dbReference type="InterPro" id="IPR023798">
    <property type="entry name" value="Ribosomal_uS7_dom"/>
</dbReference>
<dbReference type="InterPro" id="IPR036823">
    <property type="entry name" value="Ribosomal_uS7_dom_sf"/>
</dbReference>
<dbReference type="NCBIfam" id="TIGR01029">
    <property type="entry name" value="rpsG_bact"/>
    <property type="match status" value="1"/>
</dbReference>
<dbReference type="PANTHER" id="PTHR11205">
    <property type="entry name" value="RIBOSOMAL PROTEIN S7"/>
    <property type="match status" value="1"/>
</dbReference>
<dbReference type="Pfam" id="PF00177">
    <property type="entry name" value="Ribosomal_S7"/>
    <property type="match status" value="1"/>
</dbReference>
<dbReference type="PIRSF" id="PIRSF002122">
    <property type="entry name" value="RPS7p_RPS7a_RPS5e_RPS7o"/>
    <property type="match status" value="1"/>
</dbReference>
<dbReference type="SUPFAM" id="SSF47973">
    <property type="entry name" value="Ribosomal protein S7"/>
    <property type="match status" value="1"/>
</dbReference>
<dbReference type="PROSITE" id="PS00052">
    <property type="entry name" value="RIBOSOMAL_S7"/>
    <property type="match status" value="1"/>
</dbReference>
<comment type="function">
    <text evidence="1">One of the primary rRNA binding proteins, it binds directly to 16S rRNA where it nucleates assembly of the head domain of the 30S subunit. Is located at the subunit interface close to the decoding center, probably blocks exit of the E-site tRNA.</text>
</comment>
<comment type="subunit">
    <text evidence="1">Part of the 30S ribosomal subunit. Contacts proteins S9 and S11.</text>
</comment>
<comment type="similarity">
    <text evidence="1">Belongs to the universal ribosomal protein uS7 family.</text>
</comment>
<accession>A3DIZ8</accession>
<gene>
    <name evidence="1" type="primary">rpsG</name>
    <name type="ordered locus">Cthe_2728</name>
</gene>
<protein>
    <recommendedName>
        <fullName evidence="1">Small ribosomal subunit protein uS7</fullName>
    </recommendedName>
    <alternativeName>
        <fullName evidence="2">30S ribosomal protein S7</fullName>
    </alternativeName>
</protein>
<evidence type="ECO:0000255" key="1">
    <source>
        <dbReference type="HAMAP-Rule" id="MF_00480"/>
    </source>
</evidence>
<evidence type="ECO:0000305" key="2"/>
<organism>
    <name type="scientific">Acetivibrio thermocellus (strain ATCC 27405 / DSM 1237 / JCM 9322 / NBRC 103400 / NCIMB 10682 / NRRL B-4536 / VPI 7372)</name>
    <name type="common">Clostridium thermocellum</name>
    <dbReference type="NCBI Taxonomy" id="203119"/>
    <lineage>
        <taxon>Bacteria</taxon>
        <taxon>Bacillati</taxon>
        <taxon>Bacillota</taxon>
        <taxon>Clostridia</taxon>
        <taxon>Eubacteriales</taxon>
        <taxon>Oscillospiraceae</taxon>
        <taxon>Acetivibrio</taxon>
    </lineage>
</organism>
<feature type="chain" id="PRO_1000014182" description="Small ribosomal subunit protein uS7">
    <location>
        <begin position="1"/>
        <end position="156"/>
    </location>
</feature>
<name>RS7_ACET2</name>
<keyword id="KW-1185">Reference proteome</keyword>
<keyword id="KW-0687">Ribonucleoprotein</keyword>
<keyword id="KW-0689">Ribosomal protein</keyword>
<keyword id="KW-0694">RNA-binding</keyword>
<keyword id="KW-0699">rRNA-binding</keyword>
<keyword id="KW-0820">tRNA-binding</keyword>